<keyword id="KW-0004">4Fe-4S</keyword>
<keyword id="KW-0963">Cytoplasm</keyword>
<keyword id="KW-1015">Disulfide bond</keyword>
<keyword id="KW-0408">Iron</keyword>
<keyword id="KW-0411">Iron-sulfur</keyword>
<keyword id="KW-0479">Metal-binding</keyword>
<keyword id="KW-0489">Methyltransferase</keyword>
<keyword id="KW-0698">rRNA processing</keyword>
<keyword id="KW-0949">S-adenosyl-L-methionine</keyword>
<keyword id="KW-0808">Transferase</keyword>
<keyword id="KW-0819">tRNA processing</keyword>
<gene>
    <name evidence="1" type="primary">rlmN</name>
    <name type="ordered locus">Tery_2928</name>
</gene>
<evidence type="ECO:0000255" key="1">
    <source>
        <dbReference type="HAMAP-Rule" id="MF_01849"/>
    </source>
</evidence>
<evidence type="ECO:0000255" key="2">
    <source>
        <dbReference type="PROSITE-ProRule" id="PRU01266"/>
    </source>
</evidence>
<dbReference type="EC" id="2.1.1.192" evidence="1"/>
<dbReference type="EMBL" id="CP000393">
    <property type="protein sequence ID" value="ABG52093.1"/>
    <property type="molecule type" value="Genomic_DNA"/>
</dbReference>
<dbReference type="RefSeq" id="WP_011612451.1">
    <property type="nucleotide sequence ID" value="NC_008312.1"/>
</dbReference>
<dbReference type="SMR" id="Q110I1"/>
<dbReference type="STRING" id="203124.Tery_2928"/>
<dbReference type="KEGG" id="ter:Tery_2928"/>
<dbReference type="eggNOG" id="COG0820">
    <property type="taxonomic scope" value="Bacteria"/>
</dbReference>
<dbReference type="HOGENOM" id="CLU_029101_1_1_3"/>
<dbReference type="OrthoDB" id="9793973at2"/>
<dbReference type="GO" id="GO:0005737">
    <property type="term" value="C:cytoplasm"/>
    <property type="evidence" value="ECO:0007669"/>
    <property type="project" value="UniProtKB-SubCell"/>
</dbReference>
<dbReference type="GO" id="GO:0051539">
    <property type="term" value="F:4 iron, 4 sulfur cluster binding"/>
    <property type="evidence" value="ECO:0007669"/>
    <property type="project" value="UniProtKB-UniRule"/>
</dbReference>
<dbReference type="GO" id="GO:0046872">
    <property type="term" value="F:metal ion binding"/>
    <property type="evidence" value="ECO:0007669"/>
    <property type="project" value="UniProtKB-KW"/>
</dbReference>
<dbReference type="GO" id="GO:0070040">
    <property type="term" value="F:rRNA (adenine(2503)-C2-)-methyltransferase activity"/>
    <property type="evidence" value="ECO:0007669"/>
    <property type="project" value="UniProtKB-UniRule"/>
</dbReference>
<dbReference type="GO" id="GO:0019843">
    <property type="term" value="F:rRNA binding"/>
    <property type="evidence" value="ECO:0007669"/>
    <property type="project" value="UniProtKB-UniRule"/>
</dbReference>
<dbReference type="GO" id="GO:0002935">
    <property type="term" value="F:tRNA (adenine(37)-C2)-methyltransferase activity"/>
    <property type="evidence" value="ECO:0007669"/>
    <property type="project" value="UniProtKB-UniRule"/>
</dbReference>
<dbReference type="GO" id="GO:0000049">
    <property type="term" value="F:tRNA binding"/>
    <property type="evidence" value="ECO:0007669"/>
    <property type="project" value="UniProtKB-UniRule"/>
</dbReference>
<dbReference type="GO" id="GO:0070475">
    <property type="term" value="P:rRNA base methylation"/>
    <property type="evidence" value="ECO:0007669"/>
    <property type="project" value="UniProtKB-UniRule"/>
</dbReference>
<dbReference type="GO" id="GO:0030488">
    <property type="term" value="P:tRNA methylation"/>
    <property type="evidence" value="ECO:0007669"/>
    <property type="project" value="UniProtKB-UniRule"/>
</dbReference>
<dbReference type="CDD" id="cd01335">
    <property type="entry name" value="Radical_SAM"/>
    <property type="match status" value="1"/>
</dbReference>
<dbReference type="FunFam" id="3.20.20.70:FF:000014">
    <property type="entry name" value="Probable dual-specificity RNA methyltransferase RlmN"/>
    <property type="match status" value="1"/>
</dbReference>
<dbReference type="Gene3D" id="1.10.150.530">
    <property type="match status" value="1"/>
</dbReference>
<dbReference type="Gene3D" id="3.20.20.70">
    <property type="entry name" value="Aldolase class I"/>
    <property type="match status" value="1"/>
</dbReference>
<dbReference type="HAMAP" id="MF_01849">
    <property type="entry name" value="RNA_methyltr_RlmN"/>
    <property type="match status" value="1"/>
</dbReference>
<dbReference type="InterPro" id="IPR013785">
    <property type="entry name" value="Aldolase_TIM"/>
</dbReference>
<dbReference type="InterPro" id="IPR040072">
    <property type="entry name" value="Methyltransferase_A"/>
</dbReference>
<dbReference type="InterPro" id="IPR048641">
    <property type="entry name" value="RlmN_N"/>
</dbReference>
<dbReference type="InterPro" id="IPR027492">
    <property type="entry name" value="RNA_MTrfase_RlmN"/>
</dbReference>
<dbReference type="InterPro" id="IPR004383">
    <property type="entry name" value="rRNA_lsu_MTrfase_RlmN/Cfr"/>
</dbReference>
<dbReference type="InterPro" id="IPR007197">
    <property type="entry name" value="rSAM"/>
</dbReference>
<dbReference type="NCBIfam" id="TIGR00048">
    <property type="entry name" value="rRNA_mod_RlmN"/>
    <property type="match status" value="1"/>
</dbReference>
<dbReference type="PANTHER" id="PTHR30544">
    <property type="entry name" value="23S RRNA METHYLTRANSFERASE"/>
    <property type="match status" value="1"/>
</dbReference>
<dbReference type="PANTHER" id="PTHR30544:SF5">
    <property type="entry name" value="RADICAL SAM CORE DOMAIN-CONTAINING PROTEIN"/>
    <property type="match status" value="1"/>
</dbReference>
<dbReference type="Pfam" id="PF04055">
    <property type="entry name" value="Radical_SAM"/>
    <property type="match status" value="1"/>
</dbReference>
<dbReference type="Pfam" id="PF21016">
    <property type="entry name" value="RlmN_N"/>
    <property type="match status" value="1"/>
</dbReference>
<dbReference type="PIRSF" id="PIRSF006004">
    <property type="entry name" value="CHP00048"/>
    <property type="match status" value="1"/>
</dbReference>
<dbReference type="SFLD" id="SFLDF00275">
    <property type="entry name" value="adenosine_C2_methyltransferase"/>
    <property type="match status" value="1"/>
</dbReference>
<dbReference type="SFLD" id="SFLDS00029">
    <property type="entry name" value="Radical_SAM"/>
    <property type="match status" value="1"/>
</dbReference>
<dbReference type="SUPFAM" id="SSF102114">
    <property type="entry name" value="Radical SAM enzymes"/>
    <property type="match status" value="1"/>
</dbReference>
<dbReference type="PROSITE" id="PS51918">
    <property type="entry name" value="RADICAL_SAM"/>
    <property type="match status" value="1"/>
</dbReference>
<accession>Q110I1</accession>
<sequence length="345" mass="38887">MTQSFKTPTQTPLLGLSLAKLTEWVQQQGQPAYRGKQLYQWIYQKGAKSLADITVFSKQWREEISNFPIGRSVIHHRSVAPDATVKYLLKLSDGNIIETVGIPTYKRLTVCVSSQVGCPMACDFCATGKGGFSRNLEAHEIIDQVLTVQEDFERRVSHIVFMGMGEPLLNTKNVLAAVRSLNQDLGIGQRLITISTSGIRDRIRQLAQHKLQVTLAVSLHASNQRLREHLIPSAKFYPLADLISECREYVKITKRRISFEYILLASFNDLPDHARELAKNMRGFQCHVNLIPYNPISEVDYQRPTQEMIKTFANALAEQNIAVSIRYSRGLEANAACGQLRASRV</sequence>
<proteinExistence type="inferred from homology"/>
<feature type="chain" id="PRO_0000350511" description="Probable dual-specificity RNA methyltransferase RlmN">
    <location>
        <begin position="1"/>
        <end position="345"/>
    </location>
</feature>
<feature type="domain" description="Radical SAM core" evidence="2">
    <location>
        <begin position="104"/>
        <end position="332"/>
    </location>
</feature>
<feature type="active site" description="Proton acceptor" evidence="1">
    <location>
        <position position="98"/>
    </location>
</feature>
<feature type="active site" description="S-methylcysteine intermediate" evidence="1">
    <location>
        <position position="337"/>
    </location>
</feature>
<feature type="binding site" evidence="1">
    <location>
        <position position="118"/>
    </location>
    <ligand>
        <name>[4Fe-4S] cluster</name>
        <dbReference type="ChEBI" id="CHEBI:49883"/>
        <note>4Fe-4S-S-AdoMet</note>
    </ligand>
</feature>
<feature type="binding site" evidence="1">
    <location>
        <position position="122"/>
    </location>
    <ligand>
        <name>[4Fe-4S] cluster</name>
        <dbReference type="ChEBI" id="CHEBI:49883"/>
        <note>4Fe-4S-S-AdoMet</note>
    </ligand>
</feature>
<feature type="binding site" evidence="1">
    <location>
        <position position="125"/>
    </location>
    <ligand>
        <name>[4Fe-4S] cluster</name>
        <dbReference type="ChEBI" id="CHEBI:49883"/>
        <note>4Fe-4S-S-AdoMet</note>
    </ligand>
</feature>
<feature type="binding site" evidence="1">
    <location>
        <begin position="165"/>
        <end position="166"/>
    </location>
    <ligand>
        <name>S-adenosyl-L-methionine</name>
        <dbReference type="ChEBI" id="CHEBI:59789"/>
    </ligand>
</feature>
<feature type="binding site" evidence="1">
    <location>
        <position position="195"/>
    </location>
    <ligand>
        <name>S-adenosyl-L-methionine</name>
        <dbReference type="ChEBI" id="CHEBI:59789"/>
    </ligand>
</feature>
<feature type="binding site" evidence="1">
    <location>
        <begin position="218"/>
        <end position="220"/>
    </location>
    <ligand>
        <name>S-adenosyl-L-methionine</name>
        <dbReference type="ChEBI" id="CHEBI:59789"/>
    </ligand>
</feature>
<feature type="binding site" evidence="1">
    <location>
        <position position="294"/>
    </location>
    <ligand>
        <name>S-adenosyl-L-methionine</name>
        <dbReference type="ChEBI" id="CHEBI:59789"/>
    </ligand>
</feature>
<feature type="disulfide bond" description="(transient)" evidence="1">
    <location>
        <begin position="111"/>
        <end position="337"/>
    </location>
</feature>
<organism>
    <name type="scientific">Trichodesmium erythraeum (strain IMS101)</name>
    <dbReference type="NCBI Taxonomy" id="203124"/>
    <lineage>
        <taxon>Bacteria</taxon>
        <taxon>Bacillati</taxon>
        <taxon>Cyanobacteriota</taxon>
        <taxon>Cyanophyceae</taxon>
        <taxon>Oscillatoriophycideae</taxon>
        <taxon>Oscillatoriales</taxon>
        <taxon>Microcoleaceae</taxon>
        <taxon>Trichodesmium</taxon>
    </lineage>
</organism>
<reference key="1">
    <citation type="journal article" date="2015" name="Proc. Natl. Acad. Sci. U.S.A.">
        <title>Trichodesmium genome maintains abundant, widespread noncoding DNA in situ, despite oligotrophic lifestyle.</title>
        <authorList>
            <person name="Walworth N."/>
            <person name="Pfreundt U."/>
            <person name="Nelson W.C."/>
            <person name="Mincer T."/>
            <person name="Heidelberg J.F."/>
            <person name="Fu F."/>
            <person name="Waterbury J.B."/>
            <person name="Glavina del Rio T."/>
            <person name="Goodwin L."/>
            <person name="Kyrpides N.C."/>
            <person name="Land M.L."/>
            <person name="Woyke T."/>
            <person name="Hutchins D.A."/>
            <person name="Hess W.R."/>
            <person name="Webb E.A."/>
        </authorList>
    </citation>
    <scope>NUCLEOTIDE SEQUENCE [LARGE SCALE GENOMIC DNA]</scope>
    <source>
        <strain>IMS101</strain>
    </source>
</reference>
<protein>
    <recommendedName>
        <fullName evidence="1">Probable dual-specificity RNA methyltransferase RlmN</fullName>
        <ecNumber evidence="1">2.1.1.192</ecNumber>
    </recommendedName>
    <alternativeName>
        <fullName evidence="1">23S rRNA (adenine(2503)-C(2))-methyltransferase</fullName>
    </alternativeName>
    <alternativeName>
        <fullName evidence="1">23S rRNA m2A2503 methyltransferase</fullName>
    </alternativeName>
    <alternativeName>
        <fullName evidence="1">Ribosomal RNA large subunit methyltransferase N</fullName>
    </alternativeName>
    <alternativeName>
        <fullName evidence="1">tRNA (adenine(37)-C(2))-methyltransferase</fullName>
    </alternativeName>
    <alternativeName>
        <fullName evidence="1">tRNA m2A37 methyltransferase</fullName>
    </alternativeName>
</protein>
<comment type="function">
    <text evidence="1">Specifically methylates position 2 of adenine 2503 in 23S rRNA and position 2 of adenine 37 in tRNAs.</text>
</comment>
<comment type="catalytic activity">
    <reaction evidence="1">
        <text>adenosine(2503) in 23S rRNA + 2 reduced [2Fe-2S]-[ferredoxin] + 2 S-adenosyl-L-methionine = 2-methyladenosine(2503) in 23S rRNA + 5'-deoxyadenosine + L-methionine + 2 oxidized [2Fe-2S]-[ferredoxin] + S-adenosyl-L-homocysteine</text>
        <dbReference type="Rhea" id="RHEA:42916"/>
        <dbReference type="Rhea" id="RHEA-COMP:10000"/>
        <dbReference type="Rhea" id="RHEA-COMP:10001"/>
        <dbReference type="Rhea" id="RHEA-COMP:10152"/>
        <dbReference type="Rhea" id="RHEA-COMP:10282"/>
        <dbReference type="ChEBI" id="CHEBI:17319"/>
        <dbReference type="ChEBI" id="CHEBI:33737"/>
        <dbReference type="ChEBI" id="CHEBI:33738"/>
        <dbReference type="ChEBI" id="CHEBI:57844"/>
        <dbReference type="ChEBI" id="CHEBI:57856"/>
        <dbReference type="ChEBI" id="CHEBI:59789"/>
        <dbReference type="ChEBI" id="CHEBI:74411"/>
        <dbReference type="ChEBI" id="CHEBI:74497"/>
        <dbReference type="EC" id="2.1.1.192"/>
    </reaction>
</comment>
<comment type="catalytic activity">
    <reaction evidence="1">
        <text>adenosine(37) in tRNA + 2 reduced [2Fe-2S]-[ferredoxin] + 2 S-adenosyl-L-methionine = 2-methyladenosine(37) in tRNA + 5'-deoxyadenosine + L-methionine + 2 oxidized [2Fe-2S]-[ferredoxin] + S-adenosyl-L-homocysteine</text>
        <dbReference type="Rhea" id="RHEA:43332"/>
        <dbReference type="Rhea" id="RHEA-COMP:10000"/>
        <dbReference type="Rhea" id="RHEA-COMP:10001"/>
        <dbReference type="Rhea" id="RHEA-COMP:10162"/>
        <dbReference type="Rhea" id="RHEA-COMP:10485"/>
        <dbReference type="ChEBI" id="CHEBI:17319"/>
        <dbReference type="ChEBI" id="CHEBI:33737"/>
        <dbReference type="ChEBI" id="CHEBI:33738"/>
        <dbReference type="ChEBI" id="CHEBI:57844"/>
        <dbReference type="ChEBI" id="CHEBI:57856"/>
        <dbReference type="ChEBI" id="CHEBI:59789"/>
        <dbReference type="ChEBI" id="CHEBI:74411"/>
        <dbReference type="ChEBI" id="CHEBI:74497"/>
        <dbReference type="EC" id="2.1.1.192"/>
    </reaction>
</comment>
<comment type="cofactor">
    <cofactor evidence="1">
        <name>[4Fe-4S] cluster</name>
        <dbReference type="ChEBI" id="CHEBI:49883"/>
    </cofactor>
    <text evidence="1">Binds 1 [4Fe-4S] cluster. The cluster is coordinated with 3 cysteines and an exchangeable S-adenosyl-L-methionine.</text>
</comment>
<comment type="subcellular location">
    <subcellularLocation>
        <location evidence="1">Cytoplasm</location>
    </subcellularLocation>
</comment>
<comment type="miscellaneous">
    <text evidence="1">Reaction proceeds by a ping-pong mechanism involving intermediate methylation of a conserved cysteine residue.</text>
</comment>
<comment type="similarity">
    <text evidence="1">Belongs to the radical SAM superfamily. RlmN family.</text>
</comment>
<name>RLMN_TRIEI</name>